<keyword id="KW-0903">Direct protein sequencing</keyword>
<keyword id="KW-1015">Disulfide bond</keyword>
<keyword id="KW-0528">Neurotoxin</keyword>
<keyword id="KW-0629">Postsynaptic neurotoxin</keyword>
<keyword id="KW-0964">Secreted</keyword>
<keyword id="KW-0732">Signal</keyword>
<keyword id="KW-0800">Toxin</keyword>
<protein>
    <recommendedName>
        <fullName>U4-theraphotoxin-Hhn1a</fullName>
        <shortName>U4-TRTX-Hhn1a</shortName>
    </recommendedName>
    <alternativeName>
        <fullName>Hainantoxin-II.6</fullName>
        <shortName>HNTX-II.6</shortName>
    </alternativeName>
    <alternativeName>
        <fullName>Peptide F8-20.15</fullName>
    </alternativeName>
</protein>
<dbReference type="EMBL" id="GU292886">
    <property type="protein sequence ID" value="ADB56702.1"/>
    <property type="molecule type" value="mRNA"/>
</dbReference>
<dbReference type="SMR" id="D2Y209"/>
<dbReference type="ArachnoServer" id="AS001783">
    <property type="toxin name" value="U4-theraphotoxin-Hhn1a"/>
</dbReference>
<dbReference type="GO" id="GO:0005576">
    <property type="term" value="C:extracellular region"/>
    <property type="evidence" value="ECO:0007669"/>
    <property type="project" value="UniProtKB-SubCell"/>
</dbReference>
<dbReference type="GO" id="GO:0035792">
    <property type="term" value="C:host cell postsynaptic membrane"/>
    <property type="evidence" value="ECO:0007669"/>
    <property type="project" value="UniProtKB-KW"/>
</dbReference>
<dbReference type="GO" id="GO:0090729">
    <property type="term" value="F:toxin activity"/>
    <property type="evidence" value="ECO:0007669"/>
    <property type="project" value="UniProtKB-KW"/>
</dbReference>
<dbReference type="InterPro" id="IPR012625">
    <property type="entry name" value="Hwtx-2-like"/>
</dbReference>
<dbReference type="Pfam" id="PF08089">
    <property type="entry name" value="Toxin_20"/>
    <property type="match status" value="1"/>
</dbReference>
<dbReference type="SUPFAM" id="SSF57059">
    <property type="entry name" value="omega toxin-like"/>
    <property type="match status" value="1"/>
</dbReference>
<dbReference type="PROSITE" id="PS60022">
    <property type="entry name" value="HWTX_2"/>
    <property type="match status" value="1"/>
</dbReference>
<proteinExistence type="evidence at protein level"/>
<accession>D2Y209</accession>
<evidence type="ECO:0000250" key="1"/>
<evidence type="ECO:0000255" key="2"/>
<evidence type="ECO:0000269" key="3">
    <source>
    </source>
</evidence>
<evidence type="ECO:0000269" key="4">
    <source>
    </source>
</evidence>
<evidence type="ECO:0000305" key="5"/>
<name>H2A06_CYRHA</name>
<feature type="signal peptide" evidence="2">
    <location>
        <begin position="1"/>
        <end position="22"/>
    </location>
</feature>
<feature type="propeptide" id="PRO_0000400729" evidence="3 4">
    <location>
        <begin position="23"/>
        <end position="48"/>
    </location>
</feature>
<feature type="peptide" id="PRO_0000400730" description="U4-theraphotoxin-Hhn1a">
    <location>
        <begin position="49"/>
        <end position="85"/>
    </location>
</feature>
<feature type="disulfide bond" evidence="1">
    <location>
        <begin position="52"/>
        <end position="66"/>
    </location>
</feature>
<feature type="disulfide bond" evidence="1">
    <location>
        <begin position="56"/>
        <end position="77"/>
    </location>
</feature>
<feature type="disulfide bond" evidence="1">
    <location>
        <begin position="71"/>
        <end position="82"/>
    </location>
</feature>
<sequence>MKVTLIAILTCAAVLVLHTTAAEELEAESQLMKVGMPDTELAAVDEERLFECSVSCEIEKEGNKDCKKKKCKGGWKCKFNMCVKV</sequence>
<reference key="1">
    <citation type="journal article" date="2010" name="J. Proteome Res.">
        <title>Molecular diversification of peptide toxins from the tarantula Haplopelma hainanum (Ornithoctonus hainana) venom based on transcriptomic, peptidomic, and genomic analyses.</title>
        <authorList>
            <person name="Tang X."/>
            <person name="Zhang Y."/>
            <person name="Hu W."/>
            <person name="Xu D."/>
            <person name="Tao H."/>
            <person name="Yang X."/>
            <person name="Li Y."/>
            <person name="Jiang L."/>
            <person name="Liang S."/>
        </authorList>
    </citation>
    <scope>NUCLEOTIDE SEQUENCE [LARGE SCALE MRNA]</scope>
    <scope>PROTEIN SEQUENCE OF 49-85</scope>
    <scope>IDENTIFICATION BY MASS SPECTROMETRY</scope>
    <source>
        <tissue>Venom</tissue>
        <tissue>Venom gland</tissue>
    </source>
</reference>
<reference key="2">
    <citation type="journal article" date="2010" name="Dong Wu Xue Yan Jiu">
        <title>Isolation and characterization of Hainantoxin-II, a new neurotoxic peptide from the Chinese bird spider (Haplopelma hainanum).</title>
        <authorList>
            <person name="Pan J.Y."/>
            <person name="Yu Z.Q."/>
        </authorList>
    </citation>
    <scope>PROTEIN SEQUENCE OF 49-85</scope>
    <scope>FUNCTION</scope>
    <scope>MASS SPECTROMETRY</scope>
    <scope>TOXIC DOSE</scope>
    <source>
        <tissue>Venom</tissue>
    </source>
</reference>
<comment type="function">
    <text evidence="4">Neurotoxin active on both insects and mammals.</text>
</comment>
<comment type="subunit">
    <text>Monomer.</text>
</comment>
<comment type="subcellular location">
    <subcellularLocation>
        <location>Secreted</location>
    </subcellularLocation>
</comment>
<comment type="tissue specificity">
    <text>Expressed by the venom gland.</text>
</comment>
<comment type="mass spectrometry"/>
<comment type="toxic dose">
    <text evidence="4">LD(50) is 1.41 mg/kg by intracerebroventricular injection into mice.</text>
</comment>
<comment type="toxic dose">
    <text evidence="4">PD(50) is 16 mg/kg in cockroaches.</text>
</comment>
<comment type="similarity">
    <text evidence="5">Belongs to the neurotoxin 12 (Hwtx-2) family. 02 (Hwtx-2) subfamily.</text>
</comment>
<organism>
    <name type="scientific">Cyriopagopus hainanus</name>
    <name type="common">Chinese bird spider</name>
    <name type="synonym">Haplopelma hainanum</name>
    <dbReference type="NCBI Taxonomy" id="209901"/>
    <lineage>
        <taxon>Eukaryota</taxon>
        <taxon>Metazoa</taxon>
        <taxon>Ecdysozoa</taxon>
        <taxon>Arthropoda</taxon>
        <taxon>Chelicerata</taxon>
        <taxon>Arachnida</taxon>
        <taxon>Araneae</taxon>
        <taxon>Mygalomorphae</taxon>
        <taxon>Theraphosidae</taxon>
        <taxon>Haplopelma</taxon>
    </lineage>
</organism>